<proteinExistence type="inferred from homology"/>
<protein>
    <recommendedName>
        <fullName evidence="3">Photosystem II reaction center protein Z</fullName>
        <shortName evidence="3">PSII-Z</shortName>
    </recommendedName>
</protein>
<comment type="function">
    <text evidence="1">May control the interaction of photosystem II (PSII) cores with the light-harvesting antenna, regulates electron flow through the 2 photosystem reaction centers. PSII is a light-driven water plastoquinone oxidoreductase, using light energy to abstract electrons from H(2)O, generating a proton gradient subsequently used for ATP formation.</text>
</comment>
<comment type="subunit">
    <text evidence="1">PSII is composed of 1 copy each of membrane proteins PsbA, PsbB, PsbC, PsbD, PsbE, PsbF, PsbH, PsbI, PsbJ, PsbK, PsbL, PsbM, PsbT, PsbY, PsbZ, Psb30/Ycf12, at least 3 peripheral proteins of the oxygen-evolving complex and a large number of cofactors. It forms dimeric complexes.</text>
</comment>
<comment type="subcellular location">
    <subcellularLocation>
        <location evidence="1">Plastid</location>
        <location evidence="1">Chloroplast thylakoid membrane</location>
        <topology evidence="1">Single-pass membrane protein</topology>
    </subcellularLocation>
</comment>
<comment type="similarity">
    <text evidence="3">Belongs to the PsbZ family.</text>
</comment>
<dbReference type="EMBL" id="AY047484">
    <property type="protein sequence ID" value="AAL83361.1"/>
    <property type="molecule type" value="Genomic_DNA"/>
</dbReference>
<dbReference type="SMR" id="Q8SL93"/>
<dbReference type="GO" id="GO:0009535">
    <property type="term" value="C:chloroplast thylakoid membrane"/>
    <property type="evidence" value="ECO:0007669"/>
    <property type="project" value="UniProtKB-SubCell"/>
</dbReference>
<dbReference type="GO" id="GO:0009539">
    <property type="term" value="C:photosystem II reaction center"/>
    <property type="evidence" value="ECO:0007669"/>
    <property type="project" value="InterPro"/>
</dbReference>
<dbReference type="GO" id="GO:0015979">
    <property type="term" value="P:photosynthesis"/>
    <property type="evidence" value="ECO:0007669"/>
    <property type="project" value="UniProtKB-KW"/>
</dbReference>
<dbReference type="GO" id="GO:0042549">
    <property type="term" value="P:photosystem II stabilization"/>
    <property type="evidence" value="ECO:0007669"/>
    <property type="project" value="InterPro"/>
</dbReference>
<dbReference type="Gene3D" id="1.10.287.740">
    <property type="entry name" value="Photosystem II PsbZ, reaction centre"/>
    <property type="match status" value="1"/>
</dbReference>
<dbReference type="InterPro" id="IPR002644">
    <property type="entry name" value="PSII_PsbZ"/>
</dbReference>
<dbReference type="InterPro" id="IPR036512">
    <property type="entry name" value="PSII_PsbZ_sf"/>
</dbReference>
<dbReference type="Pfam" id="PF01737">
    <property type="entry name" value="Ycf9"/>
    <property type="match status" value="1"/>
</dbReference>
<dbReference type="SUPFAM" id="SSF161055">
    <property type="entry name" value="PsbZ-like"/>
    <property type="match status" value="1"/>
</dbReference>
<feature type="chain" id="PRO_0000217699" description="Photosystem II reaction center protein Z">
    <location>
        <begin position="1" status="less than"/>
        <end position="32"/>
    </location>
</feature>
<feature type="transmembrane region" description="Helical" evidence="2">
    <location>
        <begin position="12"/>
        <end position="32"/>
    </location>
</feature>
<feature type="non-terminal residue">
    <location>
        <position position="1"/>
    </location>
</feature>
<accession>Q8SL93</accession>
<organism>
    <name type="scientific">Euglena granulata</name>
    <dbReference type="NCBI Taxonomy" id="69255"/>
    <lineage>
        <taxon>Eukaryota</taxon>
        <taxon>Discoba</taxon>
        <taxon>Euglenozoa</taxon>
        <taxon>Euglenida</taxon>
        <taxon>Spirocuta</taxon>
        <taxon>Euglenophyceae</taxon>
        <taxon>Euglenales</taxon>
        <taxon>Euglenaceae</taxon>
        <taxon>Euglena</taxon>
    </lineage>
</organism>
<evidence type="ECO:0000250" key="1">
    <source>
        <dbReference type="UniProtKB" id="P92276"/>
    </source>
</evidence>
<evidence type="ECO:0000255" key="2"/>
<evidence type="ECO:0000305" key="3"/>
<name>PSBZ_EUGGA</name>
<gene>
    <name evidence="3" type="primary">psbZ</name>
    <name type="synonym">ycf9</name>
</gene>
<reference key="1">
    <citation type="journal article" date="2002" name="Nucleic Acids Res.">
        <title>Identification and comparative analysis of the chloroplast alpha-subunit gene of DNA-dependent RNA polymerase from seven Euglena species.</title>
        <authorList>
            <person name="Sheveleva E.V."/>
            <person name="Giordani N.V."/>
            <person name="Hallick R.B."/>
        </authorList>
    </citation>
    <scope>NUCLEOTIDE SEQUENCE [GENOMIC DNA]</scope>
</reference>
<sequence length="32" mass="3575">NGWNDNKNFVLFGAAAWIGLVLLVGTLYYFVV</sequence>
<geneLocation type="chloroplast"/>
<keyword id="KW-0150">Chloroplast</keyword>
<keyword id="KW-0472">Membrane</keyword>
<keyword id="KW-0602">Photosynthesis</keyword>
<keyword id="KW-0604">Photosystem II</keyword>
<keyword id="KW-0934">Plastid</keyword>
<keyword id="KW-0674">Reaction center</keyword>
<keyword id="KW-0793">Thylakoid</keyword>
<keyword id="KW-0812">Transmembrane</keyword>
<keyword id="KW-1133">Transmembrane helix</keyword>